<proteinExistence type="inferred from homology"/>
<name>IF1_STRP8</name>
<organism>
    <name type="scientific">Streptococcus pyogenes serotype M18 (strain MGAS8232)</name>
    <dbReference type="NCBI Taxonomy" id="186103"/>
    <lineage>
        <taxon>Bacteria</taxon>
        <taxon>Bacillati</taxon>
        <taxon>Bacillota</taxon>
        <taxon>Bacilli</taxon>
        <taxon>Lactobacillales</taxon>
        <taxon>Streptococcaceae</taxon>
        <taxon>Streptococcus</taxon>
    </lineage>
</organism>
<reference key="1">
    <citation type="journal article" date="2002" name="Proc. Natl. Acad. Sci. U.S.A.">
        <title>Genome sequence and comparative microarray analysis of serotype M18 group A Streptococcus strains associated with acute rheumatic fever outbreaks.</title>
        <authorList>
            <person name="Smoot J.C."/>
            <person name="Barbian K.D."/>
            <person name="Van Gompel J.J."/>
            <person name="Smoot L.M."/>
            <person name="Chaussee M.S."/>
            <person name="Sylva G.L."/>
            <person name="Sturdevant D.E."/>
            <person name="Ricklefs S.M."/>
            <person name="Porcella S.F."/>
            <person name="Parkins L.D."/>
            <person name="Beres S.B."/>
            <person name="Campbell D.S."/>
            <person name="Smith T.M."/>
            <person name="Zhang Q."/>
            <person name="Kapur V."/>
            <person name="Daly J.A."/>
            <person name="Veasy L.G."/>
            <person name="Musser J.M."/>
        </authorList>
    </citation>
    <scope>NUCLEOTIDE SEQUENCE [LARGE SCALE GENOMIC DNA]</scope>
    <source>
        <strain>MGAS8232</strain>
    </source>
</reference>
<accession>P65125</accession>
<accession>Q9A1V3</accession>
<sequence length="72" mass="8273">MAKEDVIEIEGKVVETMPNAMFTVELENGHQILATVSGKIRKNYIRILVGDRVTVEMSPYDLTRGRITYRFK</sequence>
<dbReference type="EMBL" id="AE009949">
    <property type="protein sequence ID" value="AAL96898.1"/>
    <property type="molecule type" value="Genomic_DNA"/>
</dbReference>
<dbReference type="RefSeq" id="WP_001040189.1">
    <property type="nucleotide sequence ID" value="NC_003485.1"/>
</dbReference>
<dbReference type="SMR" id="P65125"/>
<dbReference type="GeneID" id="98392414"/>
<dbReference type="KEGG" id="spm:spyM18_0075"/>
<dbReference type="HOGENOM" id="CLU_151267_1_0_9"/>
<dbReference type="GO" id="GO:0005829">
    <property type="term" value="C:cytosol"/>
    <property type="evidence" value="ECO:0007669"/>
    <property type="project" value="TreeGrafter"/>
</dbReference>
<dbReference type="GO" id="GO:0043022">
    <property type="term" value="F:ribosome binding"/>
    <property type="evidence" value="ECO:0007669"/>
    <property type="project" value="UniProtKB-UniRule"/>
</dbReference>
<dbReference type="GO" id="GO:0019843">
    <property type="term" value="F:rRNA binding"/>
    <property type="evidence" value="ECO:0007669"/>
    <property type="project" value="UniProtKB-UniRule"/>
</dbReference>
<dbReference type="GO" id="GO:0003743">
    <property type="term" value="F:translation initiation factor activity"/>
    <property type="evidence" value="ECO:0007669"/>
    <property type="project" value="UniProtKB-UniRule"/>
</dbReference>
<dbReference type="CDD" id="cd04451">
    <property type="entry name" value="S1_IF1"/>
    <property type="match status" value="1"/>
</dbReference>
<dbReference type="FunFam" id="2.40.50.140:FF:000002">
    <property type="entry name" value="Translation initiation factor IF-1"/>
    <property type="match status" value="1"/>
</dbReference>
<dbReference type="Gene3D" id="2.40.50.140">
    <property type="entry name" value="Nucleic acid-binding proteins"/>
    <property type="match status" value="1"/>
</dbReference>
<dbReference type="HAMAP" id="MF_00075">
    <property type="entry name" value="IF_1"/>
    <property type="match status" value="1"/>
</dbReference>
<dbReference type="InterPro" id="IPR012340">
    <property type="entry name" value="NA-bd_OB-fold"/>
</dbReference>
<dbReference type="InterPro" id="IPR006196">
    <property type="entry name" value="RNA-binding_domain_S1_IF1"/>
</dbReference>
<dbReference type="InterPro" id="IPR003029">
    <property type="entry name" value="S1_domain"/>
</dbReference>
<dbReference type="InterPro" id="IPR004368">
    <property type="entry name" value="TIF_IF1"/>
</dbReference>
<dbReference type="NCBIfam" id="TIGR00008">
    <property type="entry name" value="infA"/>
    <property type="match status" value="1"/>
</dbReference>
<dbReference type="PANTHER" id="PTHR33370">
    <property type="entry name" value="TRANSLATION INITIATION FACTOR IF-1, CHLOROPLASTIC"/>
    <property type="match status" value="1"/>
</dbReference>
<dbReference type="PANTHER" id="PTHR33370:SF1">
    <property type="entry name" value="TRANSLATION INITIATION FACTOR IF-1, CHLOROPLASTIC"/>
    <property type="match status" value="1"/>
</dbReference>
<dbReference type="Pfam" id="PF01176">
    <property type="entry name" value="eIF-1a"/>
    <property type="match status" value="1"/>
</dbReference>
<dbReference type="SMART" id="SM00316">
    <property type="entry name" value="S1"/>
    <property type="match status" value="1"/>
</dbReference>
<dbReference type="SUPFAM" id="SSF50249">
    <property type="entry name" value="Nucleic acid-binding proteins"/>
    <property type="match status" value="1"/>
</dbReference>
<dbReference type="PROSITE" id="PS50832">
    <property type="entry name" value="S1_IF1_TYPE"/>
    <property type="match status" value="1"/>
</dbReference>
<gene>
    <name evidence="1" type="primary">infA</name>
    <name type="ordered locus">spyM18_0075</name>
</gene>
<evidence type="ECO:0000255" key="1">
    <source>
        <dbReference type="HAMAP-Rule" id="MF_00075"/>
    </source>
</evidence>
<comment type="function">
    <text evidence="1">One of the essential components for the initiation of protein synthesis. Stabilizes the binding of IF-2 and IF-3 on the 30S subunit to which N-formylmethionyl-tRNA(fMet) subsequently binds. Helps modulate mRNA selection, yielding the 30S pre-initiation complex (PIC). Upon addition of the 50S ribosomal subunit IF-1, IF-2 and IF-3 are released leaving the mature 70S translation initiation complex.</text>
</comment>
<comment type="subunit">
    <text evidence="1">Component of the 30S ribosomal translation pre-initiation complex which assembles on the 30S ribosome in the order IF-2 and IF-3, IF-1 and N-formylmethionyl-tRNA(fMet); mRNA recruitment can occur at any time during PIC assembly.</text>
</comment>
<comment type="subcellular location">
    <subcellularLocation>
        <location evidence="1">Cytoplasm</location>
    </subcellularLocation>
</comment>
<comment type="similarity">
    <text evidence="1">Belongs to the IF-1 family.</text>
</comment>
<keyword id="KW-0963">Cytoplasm</keyword>
<keyword id="KW-0396">Initiation factor</keyword>
<keyword id="KW-0648">Protein biosynthesis</keyword>
<keyword id="KW-0694">RNA-binding</keyword>
<keyword id="KW-0699">rRNA-binding</keyword>
<feature type="chain" id="PRO_0000095884" description="Translation initiation factor IF-1">
    <location>
        <begin position="1"/>
        <end position="72"/>
    </location>
</feature>
<feature type="domain" description="S1-like" evidence="1">
    <location>
        <begin position="1"/>
        <end position="72"/>
    </location>
</feature>
<protein>
    <recommendedName>
        <fullName evidence="1">Translation initiation factor IF-1</fullName>
    </recommendedName>
</protein>